<dbReference type="EMBL" id="KT377402">
    <property type="protein sequence ID" value="AME17666.1"/>
    <property type="molecule type" value="mRNA"/>
</dbReference>
<dbReference type="SMR" id="A0A125S9E2"/>
<dbReference type="GO" id="GO:0005576">
    <property type="term" value="C:extracellular region"/>
    <property type="evidence" value="ECO:0007669"/>
    <property type="project" value="UniProtKB-SubCell"/>
</dbReference>
<dbReference type="GO" id="GO:0090729">
    <property type="term" value="F:toxin activity"/>
    <property type="evidence" value="ECO:0007669"/>
    <property type="project" value="UniProtKB-KW"/>
</dbReference>
<dbReference type="InterPro" id="IPR013141">
    <property type="entry name" value="Conotoxin-I_CS"/>
</dbReference>
<dbReference type="InterPro" id="IPR020242">
    <property type="entry name" value="Conotoxin_I2"/>
</dbReference>
<dbReference type="Pfam" id="PF17557">
    <property type="entry name" value="Conotoxin_I2"/>
    <property type="match status" value="1"/>
</dbReference>
<dbReference type="PROSITE" id="PS60019">
    <property type="entry name" value="I_CONOTOXIN"/>
    <property type="match status" value="1"/>
</dbReference>
<keyword id="KW-0027">Amidation</keyword>
<keyword id="KW-0165">Cleavage on pair of basic residues</keyword>
<keyword id="KW-1015">Disulfide bond</keyword>
<keyword id="KW-0528">Neurotoxin</keyword>
<keyword id="KW-0964">Secreted</keyword>
<keyword id="KW-0732">Signal</keyword>
<keyword id="KW-0800">Toxin</keyword>
<protein>
    <recommendedName>
        <fullName evidence="5">Conotoxin Im11.11</fullName>
    </recommendedName>
    <alternativeName>
        <fullName evidence="4 7">Conopeptide im008</fullName>
    </alternativeName>
</protein>
<organism>
    <name type="scientific">Conus imperialis</name>
    <name type="common">Imperial cone</name>
    <dbReference type="NCBI Taxonomy" id="35631"/>
    <lineage>
        <taxon>Eukaryota</taxon>
        <taxon>Metazoa</taxon>
        <taxon>Spiralia</taxon>
        <taxon>Lophotrochozoa</taxon>
        <taxon>Mollusca</taxon>
        <taxon>Gastropoda</taxon>
        <taxon>Caenogastropoda</taxon>
        <taxon>Neogastropoda</taxon>
        <taxon>Conoidea</taxon>
        <taxon>Conidae</taxon>
        <taxon>Conus</taxon>
        <taxon>Stephanoconus</taxon>
    </lineage>
</organism>
<sequence length="70" mass="7873">MFRLTSVGCILLVIAFLNLVGLTNACTSEGYSCSSDSNCCKNVCCWNVCESHCRHPGKRTRLQGFFKHRR</sequence>
<reference key="1">
    <citation type="journal article" date="2019" name="Mar. Drugs">
        <title>Transcriptomic-proteomic correlation in the predation-evoked venom of the cone snail, Conus imperialis.</title>
        <authorList>
            <person name="Jin A.H."/>
            <person name="Dutertre S."/>
            <person name="Dutt M."/>
            <person name="Lavergne V."/>
            <person name="Jones A."/>
            <person name="Lewis R.J."/>
            <person name="Alewood P.F."/>
        </authorList>
    </citation>
    <scope>NUCLEOTIDE SEQUENCE [MRNA]</scope>
    <scope>IDENTIFICATION BY MASS SPECTROMETRY</scope>
    <scope>SUBCELLULAR LOCATION</scope>
    <source>
        <tissue>Venom</tissue>
        <tissue>Venom duct</tissue>
    </source>
</reference>
<comment type="function">
    <text evidence="5">Probable neurotoxin.</text>
</comment>
<comment type="subcellular location">
    <subcellularLocation>
        <location evidence="3">Secreted</location>
    </subcellularLocation>
</comment>
<comment type="tissue specificity">
    <text evidence="6">Expressed by the venom duct.</text>
</comment>
<comment type="domain">
    <text evidence="5">The cysteine framework is XI (C-C-CC-CC-C-C).</text>
</comment>
<comment type="miscellaneous">
    <text evidence="5">The mature protein is identical to the Conus litteratus toxin AC C7DQX6.</text>
</comment>
<comment type="similarity">
    <text evidence="5">Belongs to the conotoxin I2 superfamily.</text>
</comment>
<accession>A0A125S9E2</accession>
<evidence type="ECO:0000250" key="1">
    <source>
        <dbReference type="UniProtKB" id="Q7Z094"/>
    </source>
</evidence>
<evidence type="ECO:0000255" key="2"/>
<evidence type="ECO:0000269" key="3">
    <source>
    </source>
</evidence>
<evidence type="ECO:0000303" key="4">
    <source>
    </source>
</evidence>
<evidence type="ECO:0000305" key="5"/>
<evidence type="ECO:0000305" key="6">
    <source>
    </source>
</evidence>
<evidence type="ECO:0000312" key="7">
    <source>
        <dbReference type="EMBL" id="AME17666.1"/>
    </source>
</evidence>
<name>I2BB_CONIM</name>
<feature type="signal peptide" evidence="2">
    <location>
        <begin position="1"/>
        <end position="25"/>
    </location>
</feature>
<feature type="chain" id="PRO_5007179685" description="Conotoxin Im11.11" evidence="5">
    <location>
        <begin position="26"/>
        <end position="56"/>
    </location>
</feature>
<feature type="propeptide" id="PRO_0000450999" evidence="5">
    <location>
        <begin position="60"/>
        <end position="70"/>
    </location>
</feature>
<feature type="modified residue" description="Proline amide" evidence="5">
    <location>
        <position position="56"/>
    </location>
</feature>
<feature type="disulfide bond" evidence="1">
    <location>
        <begin position="26"/>
        <end position="40"/>
    </location>
</feature>
<feature type="disulfide bond" evidence="1">
    <location>
        <begin position="33"/>
        <end position="45"/>
    </location>
</feature>
<feature type="disulfide bond" evidence="1">
    <location>
        <begin position="39"/>
        <end position="49"/>
    </location>
</feature>
<feature type="disulfide bond" evidence="1">
    <location>
        <begin position="44"/>
        <end position="53"/>
    </location>
</feature>
<proteinExistence type="evidence at protein level"/>